<keyword id="KW-0007">Acetylation</keyword>
<keyword id="KW-0966">Cell projection</keyword>
<keyword id="KW-0967">Endosome</keyword>
<keyword id="KW-0333">Golgi apparatus</keyword>
<keyword id="KW-0472">Membrane</keyword>
<keyword id="KW-1185">Reference proteome</keyword>
<keyword id="KW-0677">Repeat</keyword>
<keyword id="KW-0964">Secreted</keyword>
<keyword id="KW-0770">Synapse</keyword>
<keyword id="KW-0771">Synaptosome</keyword>
<keyword id="KW-0812">Transmembrane</keyword>
<keyword id="KW-1133">Transmembrane helix</keyword>
<keyword id="KW-0832">Ubl conjugation</keyword>
<proteinExistence type="evidence at protein level"/>
<sequence length="221" mass="24914">MALALAALAAVEPACGSGYQQLQNEEEPGEPEQTAGDAPPPYSSITAESAAYFDYKDESGFPKPPSYNVATTLPSYDEAERTKTEATIPLVPGRDEDFVGRDDFDDTDQLRIGNDGIFMLTFFMAFLFNWIGFFLSFCLTTSAAGRYGAISGFGLSLIKWILIVRFSTYFPGYFDGQYWLWWVFLVLGFLLFLRGFINYAKVRKMPETFSNLPRTRVLFIY</sequence>
<feature type="initiator methionine" description="Removed" evidence="2">
    <location>
        <position position="1"/>
    </location>
</feature>
<feature type="chain" id="PRO_0000076270" description="NEDD4 family-interacting protein 1">
    <location>
        <begin position="2"/>
        <end position="221"/>
    </location>
</feature>
<feature type="topological domain" description="Cytoplasmic" evidence="3">
    <location>
        <begin position="2"/>
        <end position="116"/>
    </location>
</feature>
<feature type="transmembrane region" description="Helical" evidence="3">
    <location>
        <begin position="117"/>
        <end position="137"/>
    </location>
</feature>
<feature type="topological domain" description="Extracellular" evidence="3">
    <location>
        <begin position="138"/>
        <end position="143"/>
    </location>
</feature>
<feature type="transmembrane region" description="Helical" evidence="3">
    <location>
        <begin position="144"/>
        <end position="164"/>
    </location>
</feature>
<feature type="topological domain" description="Cytoplasmic" evidence="3">
    <location>
        <begin position="165"/>
        <end position="172"/>
    </location>
</feature>
<feature type="transmembrane region" description="Helical" evidence="3">
    <location>
        <begin position="173"/>
        <end position="193"/>
    </location>
</feature>
<feature type="topological domain" description="Extracellular" evidence="3">
    <location>
        <begin position="194"/>
        <end position="221"/>
    </location>
</feature>
<feature type="region of interest" description="Interaction with UBE2L3" evidence="16">
    <location>
        <begin position="2"/>
        <end position="41"/>
    </location>
</feature>
<feature type="region of interest" description="Disordered" evidence="4">
    <location>
        <begin position="18"/>
        <end position="44"/>
    </location>
</feature>
<feature type="region of interest" description="Interaction with ITCH" evidence="16">
    <location>
        <begin position="42"/>
        <end position="76"/>
    </location>
</feature>
<feature type="short sequence motif" description="PPxY motif 1">
    <location>
        <begin position="39"/>
        <end position="42"/>
    </location>
</feature>
<feature type="short sequence motif" description="PPxY motif 2">
    <location>
        <begin position="64"/>
        <end position="67"/>
    </location>
</feature>
<feature type="short sequence motif" description="PPxY motif 3">
    <location>
        <begin position="74"/>
        <end position="76"/>
    </location>
</feature>
<feature type="modified residue" description="N-acetylalanine" evidence="2">
    <location>
        <position position="2"/>
    </location>
</feature>
<feature type="mutagenesis site" description="Abolishes interaction with NEDD4." evidence="5">
    <original>Y</original>
    <variation>A</variation>
    <location>
        <position position="42"/>
    </location>
</feature>
<feature type="mutagenesis site" description="Alters interaction with NEDD4." evidence="5">
    <original>Y</original>
    <variation>A</variation>
    <location>
        <position position="67"/>
    </location>
</feature>
<gene>
    <name type="primary">Ndfip1</name>
    <name type="synonym">N4wbp5</name>
</gene>
<dbReference type="EMBL" id="AF220209">
    <property type="protein sequence ID" value="AAG44248.1"/>
    <property type="status" value="ALT_INIT"/>
    <property type="molecule type" value="mRNA"/>
</dbReference>
<dbReference type="EMBL" id="AK050560">
    <property type="protein sequence ID" value="BAC34324.1"/>
    <property type="molecule type" value="mRNA"/>
</dbReference>
<dbReference type="EMBL" id="BC026372">
    <property type="protein sequence ID" value="AAH26372.1"/>
    <property type="molecule type" value="mRNA"/>
</dbReference>
<dbReference type="CCDS" id="CCDS37789.1"/>
<dbReference type="RefSeq" id="NP_001342678.1">
    <property type="nucleotide sequence ID" value="NM_001355749.1"/>
</dbReference>
<dbReference type="RefSeq" id="NP_075372.1">
    <property type="nucleotide sequence ID" value="NM_022996.2"/>
</dbReference>
<dbReference type="RefSeq" id="XP_006526212.1">
    <property type="nucleotide sequence ID" value="XM_006526149.1"/>
</dbReference>
<dbReference type="BioGRID" id="211136">
    <property type="interactions" value="13"/>
</dbReference>
<dbReference type="CORUM" id="Q8R0W6"/>
<dbReference type="FunCoup" id="Q8R0W6">
    <property type="interactions" value="2323"/>
</dbReference>
<dbReference type="IntAct" id="Q8R0W6">
    <property type="interactions" value="1"/>
</dbReference>
<dbReference type="STRING" id="10090.ENSMUSP00000158314"/>
<dbReference type="iPTMnet" id="Q8R0W6"/>
<dbReference type="PhosphoSitePlus" id="Q8R0W6"/>
<dbReference type="SwissPalm" id="Q8R0W6"/>
<dbReference type="PaxDb" id="10090-ENSMUSP00000025293"/>
<dbReference type="PeptideAtlas" id="Q8R0W6"/>
<dbReference type="ProteomicsDB" id="287407"/>
<dbReference type="Pumba" id="Q8R0W6"/>
<dbReference type="Antibodypedia" id="2434">
    <property type="antibodies" value="200 antibodies from 34 providers"/>
</dbReference>
<dbReference type="Ensembl" id="ENSMUST00000025293.5">
    <property type="protein sequence ID" value="ENSMUSP00000025293.4"/>
    <property type="gene ID" value="ENSMUSG00000024425.5"/>
</dbReference>
<dbReference type="Ensembl" id="ENSMUST00000236085.2">
    <property type="protein sequence ID" value="ENSMUSP00000158314.2"/>
    <property type="gene ID" value="ENSMUSG00000024425.5"/>
</dbReference>
<dbReference type="GeneID" id="65113"/>
<dbReference type="KEGG" id="mmu:65113"/>
<dbReference type="UCSC" id="uc008esj.1">
    <property type="organism name" value="mouse"/>
</dbReference>
<dbReference type="AGR" id="MGI:1929601"/>
<dbReference type="CTD" id="80762"/>
<dbReference type="MGI" id="MGI:1929601">
    <property type="gene designation" value="Ndfip1"/>
</dbReference>
<dbReference type="VEuPathDB" id="HostDB:ENSMUSG00000024425"/>
<dbReference type="eggNOG" id="KOG4812">
    <property type="taxonomic scope" value="Eukaryota"/>
</dbReference>
<dbReference type="GeneTree" id="ENSGT00390000012721"/>
<dbReference type="HOGENOM" id="CLU_074980_2_0_1"/>
<dbReference type="InParanoid" id="Q8R0W6"/>
<dbReference type="OMA" id="ASMVKWT"/>
<dbReference type="OrthoDB" id="10003116at2759"/>
<dbReference type="PhylomeDB" id="Q8R0W6"/>
<dbReference type="TreeFam" id="TF324911"/>
<dbReference type="BioGRID-ORCS" id="65113">
    <property type="hits" value="0 hits in 115 CRISPR screens"/>
</dbReference>
<dbReference type="ChiTaRS" id="Ndfip1">
    <property type="organism name" value="mouse"/>
</dbReference>
<dbReference type="PRO" id="PR:Q8R0W6"/>
<dbReference type="Proteomes" id="UP000000589">
    <property type="component" value="Chromosome 18"/>
</dbReference>
<dbReference type="RNAct" id="Q8R0W6">
    <property type="molecule type" value="protein"/>
</dbReference>
<dbReference type="Bgee" id="ENSMUSG00000024425">
    <property type="expression patterns" value="Expressed in subparaventricular zone and 275 other cell types or tissues"/>
</dbReference>
<dbReference type="ExpressionAtlas" id="Q8R0W6">
    <property type="expression patterns" value="baseline and differential"/>
</dbReference>
<dbReference type="GO" id="GO:0005938">
    <property type="term" value="C:cell cortex"/>
    <property type="evidence" value="ECO:0000314"/>
    <property type="project" value="MGI"/>
</dbReference>
<dbReference type="GO" id="GO:0030425">
    <property type="term" value="C:dendrite"/>
    <property type="evidence" value="ECO:0007669"/>
    <property type="project" value="UniProtKB-SubCell"/>
</dbReference>
<dbReference type="GO" id="GO:0010008">
    <property type="term" value="C:endosome membrane"/>
    <property type="evidence" value="ECO:0007669"/>
    <property type="project" value="UniProtKB-SubCell"/>
</dbReference>
<dbReference type="GO" id="GO:0005576">
    <property type="term" value="C:extracellular region"/>
    <property type="evidence" value="ECO:0007669"/>
    <property type="project" value="UniProtKB-SubCell"/>
</dbReference>
<dbReference type="GO" id="GO:0005794">
    <property type="term" value="C:Golgi apparatus"/>
    <property type="evidence" value="ECO:0000314"/>
    <property type="project" value="MGI"/>
</dbReference>
<dbReference type="GO" id="GO:0000139">
    <property type="term" value="C:Golgi membrane"/>
    <property type="evidence" value="ECO:0000305"/>
    <property type="project" value="MGI"/>
</dbReference>
<dbReference type="GO" id="GO:0016020">
    <property type="term" value="C:membrane"/>
    <property type="evidence" value="ECO:0000255"/>
    <property type="project" value="MGI"/>
</dbReference>
<dbReference type="GO" id="GO:0048471">
    <property type="term" value="C:perinuclear region of cytoplasm"/>
    <property type="evidence" value="ECO:0007669"/>
    <property type="project" value="Ensembl"/>
</dbReference>
<dbReference type="GO" id="GO:0045202">
    <property type="term" value="C:synapse"/>
    <property type="evidence" value="ECO:0007669"/>
    <property type="project" value="UniProtKB-SubCell"/>
</dbReference>
<dbReference type="GO" id="GO:0050699">
    <property type="term" value="F:WW domain binding"/>
    <property type="evidence" value="ECO:0000353"/>
    <property type="project" value="MGI"/>
</dbReference>
<dbReference type="GO" id="GO:0035739">
    <property type="term" value="P:CD4-positive, alpha-beta T cell proliferation"/>
    <property type="evidence" value="ECO:0000315"/>
    <property type="project" value="MGI"/>
</dbReference>
<dbReference type="GO" id="GO:0006879">
    <property type="term" value="P:intracellular iron ion homeostasis"/>
    <property type="evidence" value="ECO:0007669"/>
    <property type="project" value="Ensembl"/>
</dbReference>
<dbReference type="GO" id="GO:0030001">
    <property type="term" value="P:metal ion transport"/>
    <property type="evidence" value="ECO:0007669"/>
    <property type="project" value="InterPro"/>
</dbReference>
<dbReference type="GO" id="GO:2000562">
    <property type="term" value="P:negative regulation of CD4-positive, alpha-beta T cell proliferation"/>
    <property type="evidence" value="ECO:0000315"/>
    <property type="project" value="MGI"/>
</dbReference>
<dbReference type="GO" id="GO:0050728">
    <property type="term" value="P:negative regulation of inflammatory response"/>
    <property type="evidence" value="ECO:0000315"/>
    <property type="project" value="MGI"/>
</dbReference>
<dbReference type="GO" id="GO:0032713">
    <property type="term" value="P:negative regulation of interleukin-4 production"/>
    <property type="evidence" value="ECO:0000315"/>
    <property type="project" value="MGI"/>
</dbReference>
<dbReference type="GO" id="GO:0048294">
    <property type="term" value="P:negative regulation of isotype switching to IgE isotypes"/>
    <property type="evidence" value="ECO:0000315"/>
    <property type="project" value="MGI"/>
</dbReference>
<dbReference type="GO" id="GO:0051224">
    <property type="term" value="P:negative regulation of protein transport"/>
    <property type="evidence" value="ECO:0007669"/>
    <property type="project" value="Ensembl"/>
</dbReference>
<dbReference type="GO" id="GO:0002829">
    <property type="term" value="P:negative regulation of type 2 immune response"/>
    <property type="evidence" value="ECO:0000315"/>
    <property type="project" value="MGI"/>
</dbReference>
<dbReference type="GO" id="GO:0045732">
    <property type="term" value="P:positive regulation of protein catabolic process"/>
    <property type="evidence" value="ECO:0000314"/>
    <property type="project" value="MGI"/>
</dbReference>
<dbReference type="GO" id="GO:0031398">
    <property type="term" value="P:positive regulation of protein ubiquitination"/>
    <property type="evidence" value="ECO:0000250"/>
    <property type="project" value="UniProtKB"/>
</dbReference>
<dbReference type="GO" id="GO:0030163">
    <property type="term" value="P:protein catabolic process"/>
    <property type="evidence" value="ECO:0000314"/>
    <property type="project" value="MGI"/>
</dbReference>
<dbReference type="GO" id="GO:0048302">
    <property type="term" value="P:regulation of isotype switching to IgG isotypes"/>
    <property type="evidence" value="ECO:0000315"/>
    <property type="project" value="MGI"/>
</dbReference>
<dbReference type="GO" id="GO:0045619">
    <property type="term" value="P:regulation of lymphocyte differentiation"/>
    <property type="evidence" value="ECO:0000315"/>
    <property type="project" value="MGI"/>
</dbReference>
<dbReference type="GO" id="GO:0002761">
    <property type="term" value="P:regulation of myeloid leukocyte differentiation"/>
    <property type="evidence" value="ECO:0000315"/>
    <property type="project" value="MGI"/>
</dbReference>
<dbReference type="GO" id="GO:0007034">
    <property type="term" value="P:vacuolar transport"/>
    <property type="evidence" value="ECO:0007669"/>
    <property type="project" value="InterPro"/>
</dbReference>
<dbReference type="CDD" id="cd22305">
    <property type="entry name" value="NDFIP1"/>
    <property type="match status" value="1"/>
</dbReference>
<dbReference type="InterPro" id="IPR019325">
    <property type="entry name" value="NEDD4/Bsd2"/>
</dbReference>
<dbReference type="PANTHER" id="PTHR13396">
    <property type="entry name" value="NEDD4 FAMILY INTERACTING PROTEIN 1/2"/>
    <property type="match status" value="1"/>
</dbReference>
<dbReference type="PANTHER" id="PTHR13396:SF3">
    <property type="entry name" value="NEDD4 FAMILY-INTERACTING PROTEIN 1"/>
    <property type="match status" value="1"/>
</dbReference>
<dbReference type="Pfam" id="PF10176">
    <property type="entry name" value="NEDD4_Bsd2"/>
    <property type="match status" value="2"/>
</dbReference>
<organism>
    <name type="scientific">Mus musculus</name>
    <name type="common">Mouse</name>
    <dbReference type="NCBI Taxonomy" id="10090"/>
    <lineage>
        <taxon>Eukaryota</taxon>
        <taxon>Metazoa</taxon>
        <taxon>Chordata</taxon>
        <taxon>Craniata</taxon>
        <taxon>Vertebrata</taxon>
        <taxon>Euteleostomi</taxon>
        <taxon>Mammalia</taxon>
        <taxon>Eutheria</taxon>
        <taxon>Euarchontoglires</taxon>
        <taxon>Glires</taxon>
        <taxon>Rodentia</taxon>
        <taxon>Myomorpha</taxon>
        <taxon>Muroidea</taxon>
        <taxon>Muridae</taxon>
        <taxon>Murinae</taxon>
        <taxon>Mus</taxon>
        <taxon>Mus</taxon>
    </lineage>
</organism>
<comment type="function">
    <text evidence="2 6 8 12 13 14 15 16 17 18 19 20">Activates HECT domain-containing E3 ubiquitin-protein ligases, including NEDD4 and ITCH, and consequently modulates the stability of their targets. As a result, controls many cellular processes. Prevents chronic T-helper cell-mediated inflammation by activating ITCH and thus controlling JUNB degradation (PubMed:11748237, PubMed:17137798, PubMed:20962770). Promotes pancreatic beta cell death through degradation of JUNB and inhibition of the unfolded protein response, leading to reduction of insulin secretion (PubMed:26319551). Restricts the production of pro-inflammatory cytokines in effector Th17 T-cells by promoting ITCH-mediated ubiquitination and degradation of RORC (PubMed:28051111). Together with NDFIP2, limits the cytokine signaling and expansion of effector Th2 T-cells by promoting degradation of JAK1, probably by ITCH- and NEDD4L-mediated ubiquitination (PubMed:27088444). Regulates peripheral T-cell tolerance to self and foreign antigens, forcing the exit of naive CD4+ T-cells from the cell cycle before they become effector T-cells (PubMed:24520172, PubMed:28051111). Negatively regulates RLR-mediated antiviral response by promoting SMURF1-mediated ubiquitination and subsequent degradation of MAVS (By similarity). Negatively regulates KCNH2 potassium channel activity by decreasing its cell-surface expression and interfering with channel maturation through recruitment of NEDD4L to the Golgi apparatus where it mediates KCNH2 degradation (By similarity). In cortical neurons, mediates the ubiquitination of the divalent metal transporter SLC11A2/DMT1 by NEDD4L, leading to its down-regulation and protection of the cells from cobalt and iron toxicity (By similarity). Important for normal development of dendrites and dendritic spines in cortex (PubMed:23897647). Enhances the ubiquitination of BRAT1 mediated by: NEDD4, NEDD4L and ITCH and is required for the nuclear localization of ubiquitinated BRAT1 (PubMed:25631046). Enhances the ITCH-mediated ubiquitination of MAP3K7 by recruiting E2 ubiquitin-conjugating enzyme UBE2L3 to ITCH (PubMed:25632008). Modulates EGFR signaling through multiple pathways. In particular, may regulate the ratio of AKT1-to-MAPK8 signaling in response to EGF, acting on AKT1 probably through PTEN destabilization and on MAPK8 through ITCH-dependent MAP2K4 inactivation. As a result, may control cell growth rate (By similarity). Inhibits cell proliferation by promoting PTEN nuclear localization and changing its signaling specificity (PubMed:25801959).</text>
</comment>
<comment type="subunit">
    <text evidence="2 5 6 8 16">Forms heterodimers with NDFIP2 (By similarity). Interacts with several E3 ubiquitin-protein ligases, including ITCH, NEDD4, NEDD4L and WWP2 (PubMed:11042109, PubMed:11748237, PubMed:17137798, PubMed:25632008). The interaction with NEDD4, NEDD4L and ITCH leads to relocalization of these proteins to exosomes and eventually to exosomal secretion (PubMed:11748237). Interacts with U2SURP (PubMed:11748237). Interacts with SLC11A2/DMT1 (By similarity). Interacts with PTEN (By similarity). May interact with phosphorylated EGFR (By similarity). Interacts with BRAT1 (By similarity). Interacts with KCNH2 (By similarity). Interacts with MAVS (By similarity). Part of a complex containing ITCH, NDFIP1 and MAP3K7 (PubMed:25632008). Interacts (via N-terminus) with UBE2L3; the interaction mediates recruitment of UBE2L3 to ITCH (PubMed:25632008).</text>
</comment>
<comment type="interaction">
    <interactant intactId="EBI-6304119">
        <id>Q8R0W6</id>
    </interactant>
    <interactant intactId="EBI-773516">
        <id>P46935</id>
        <label>Nedd4</label>
    </interactant>
    <organismsDiffer>false</organismsDiffer>
    <experiments>5</experiments>
</comment>
<comment type="subcellular location">
    <subcellularLocation>
        <location evidence="2">Endosome membrane</location>
        <topology evidence="2">Multi-pass membrane protein</topology>
    </subcellularLocation>
    <subcellularLocation>
        <location evidence="6 7 10">Golgi apparatus membrane</location>
    </subcellularLocation>
    <subcellularLocation>
        <location evidence="13">Synapse</location>
        <location evidence="13">Synaptosome</location>
    </subcellularLocation>
    <subcellularLocation>
        <location evidence="13">Cell projection</location>
        <location evidence="13">Dendrite</location>
    </subcellularLocation>
    <subcellularLocation>
        <location evidence="2">Secreted</location>
    </subcellularLocation>
    <text evidence="2">Detected in exosomes and secreted via the exosomal pathway.</text>
</comment>
<comment type="tissue specificity">
    <text evidence="6 8 13">Highly expressed in embryonic and early postnatal cortex (at protein level) (PubMed:23897647). Widely expressed (PubMed:11748237). Hardly detectable in resting T-cells; up-regulated in T-cells in response to activation (PubMed:17137798).</text>
</comment>
<comment type="induction">
    <text evidence="7">Up-regulated after traumatic brain injury in surviving neurons around the lesion site.</text>
</comment>
<comment type="domain">
    <text evidence="5 6">The PPxY motifs are required for E3 ubiquitin-protein ligase binding and activation and for ubiquitination.</text>
</comment>
<comment type="PTM">
    <text evidence="6">Ubiquitinated by NEDD4; mono-, di- and polyubiquitinated forms are detected. Ubiquitination regulates its degradation.</text>
</comment>
<comment type="PTM">
    <text evidence="1">Undergoes transient tyrosine phosphorylation following EGF stimulation, most probably by catalyzed by SRC. Phosphorylation SRC is enhanced in the presence of NDFIP2 which may act as a scaffold to recruit SRC to NDFIP1 (By similarity).</text>
</comment>
<comment type="disruption phenotype">
    <text evidence="8 9 11 12">Mutant mice appear normal at birth, but develop severe skin and gastrointestinal tract inflammation around 6 to 8 weeks of age (PubMed:17137798, PubMed:20962770). They do not survive beyond 14 weeks (PubMed:17137798). This phenotype is due to the lack of activity of ITCH E3 ubiquitin-protein ligase, and consequently, prolongation of JUNB half-life after T-cell activation (PubMed:17137798, PubMed:20962770). This results in an increased production of T-helper 2 (Th2) cytokines and in the promotion of Th2-mediated inflammation (PubMed:17137798, PubMed:20962770). This subsequently leads to increased number of circulating, esophagus and small bowel eosinophils (PubMed:20962770). Mutant mice have thicker small bowel and do not gain as much weight as the wild type (PubMed:20962770). Mutant mice also show an increased iron transport in hepatocytes and iron accumulation in the liver around portal veins, in the villi of duodenum and throughout the brain cortex (PubMed:18776082, PubMed:19706893).</text>
</comment>
<comment type="sequence caution" evidence="21">
    <conflict type="erroneous initiation">
        <sequence resource="EMBL-CDS" id="AAG44248"/>
    </conflict>
</comment>
<name>NFIP1_MOUSE</name>
<protein>
    <recommendedName>
        <fullName>NEDD4 family-interacting protein 1</fullName>
    </recommendedName>
    <alternativeName>
        <fullName>NEDD4 WW domain-binding protein 5</fullName>
    </alternativeName>
</protein>
<evidence type="ECO:0000250" key="1"/>
<evidence type="ECO:0000250" key="2">
    <source>
        <dbReference type="UniProtKB" id="Q9BT67"/>
    </source>
</evidence>
<evidence type="ECO:0000255" key="3"/>
<evidence type="ECO:0000256" key="4">
    <source>
        <dbReference type="SAM" id="MobiDB-lite"/>
    </source>
</evidence>
<evidence type="ECO:0000269" key="5">
    <source>
    </source>
</evidence>
<evidence type="ECO:0000269" key="6">
    <source>
    </source>
</evidence>
<evidence type="ECO:0000269" key="7">
    <source>
    </source>
</evidence>
<evidence type="ECO:0000269" key="8">
    <source>
    </source>
</evidence>
<evidence type="ECO:0000269" key="9">
    <source>
    </source>
</evidence>
<evidence type="ECO:0000269" key="10">
    <source>
    </source>
</evidence>
<evidence type="ECO:0000269" key="11">
    <source>
    </source>
</evidence>
<evidence type="ECO:0000269" key="12">
    <source>
    </source>
</evidence>
<evidence type="ECO:0000269" key="13">
    <source>
    </source>
</evidence>
<evidence type="ECO:0000269" key="14">
    <source>
    </source>
</evidence>
<evidence type="ECO:0000269" key="15">
    <source>
    </source>
</evidence>
<evidence type="ECO:0000269" key="16">
    <source>
    </source>
</evidence>
<evidence type="ECO:0000269" key="17">
    <source>
    </source>
</evidence>
<evidence type="ECO:0000269" key="18">
    <source>
    </source>
</evidence>
<evidence type="ECO:0000269" key="19">
    <source>
    </source>
</evidence>
<evidence type="ECO:0000269" key="20">
    <source>
    </source>
</evidence>
<evidence type="ECO:0000305" key="21"/>
<reference key="1">
    <citation type="journal article" date="2000" name="Biochem. J.">
        <title>Identification of multiple proteins expressed in murine embryos as binding partners for the WW domains of the ubiquitin-protein ligase Nedd4.</title>
        <authorList>
            <person name="Jolliffe C.N."/>
            <person name="Harvey K.F."/>
            <person name="Haines B.P."/>
            <person name="Parasivam G."/>
            <person name="Kumar S."/>
        </authorList>
    </citation>
    <scope>NUCLEOTIDE SEQUENCE [MRNA]</scope>
    <scope>MUTAGENESIS OF TYR-42 AND TYR-67</scope>
    <scope>INTERACTION WITH NEDD4</scope>
    <scope>DOMAINS</scope>
    <source>
        <tissue>Embryo</tissue>
    </source>
</reference>
<reference key="2">
    <citation type="journal article" date="2005" name="Science">
        <title>The transcriptional landscape of the mammalian genome.</title>
        <authorList>
            <person name="Carninci P."/>
            <person name="Kasukawa T."/>
            <person name="Katayama S."/>
            <person name="Gough J."/>
            <person name="Frith M.C."/>
            <person name="Maeda N."/>
            <person name="Oyama R."/>
            <person name="Ravasi T."/>
            <person name="Lenhard B."/>
            <person name="Wells C."/>
            <person name="Kodzius R."/>
            <person name="Shimokawa K."/>
            <person name="Bajic V.B."/>
            <person name="Brenner S.E."/>
            <person name="Batalov S."/>
            <person name="Forrest A.R."/>
            <person name="Zavolan M."/>
            <person name="Davis M.J."/>
            <person name="Wilming L.G."/>
            <person name="Aidinis V."/>
            <person name="Allen J.E."/>
            <person name="Ambesi-Impiombato A."/>
            <person name="Apweiler R."/>
            <person name="Aturaliya R.N."/>
            <person name="Bailey T.L."/>
            <person name="Bansal M."/>
            <person name="Baxter L."/>
            <person name="Beisel K.W."/>
            <person name="Bersano T."/>
            <person name="Bono H."/>
            <person name="Chalk A.M."/>
            <person name="Chiu K.P."/>
            <person name="Choudhary V."/>
            <person name="Christoffels A."/>
            <person name="Clutterbuck D.R."/>
            <person name="Crowe M.L."/>
            <person name="Dalla E."/>
            <person name="Dalrymple B.P."/>
            <person name="de Bono B."/>
            <person name="Della Gatta G."/>
            <person name="di Bernardo D."/>
            <person name="Down T."/>
            <person name="Engstrom P."/>
            <person name="Fagiolini M."/>
            <person name="Faulkner G."/>
            <person name="Fletcher C.F."/>
            <person name="Fukushima T."/>
            <person name="Furuno M."/>
            <person name="Futaki S."/>
            <person name="Gariboldi M."/>
            <person name="Georgii-Hemming P."/>
            <person name="Gingeras T.R."/>
            <person name="Gojobori T."/>
            <person name="Green R.E."/>
            <person name="Gustincich S."/>
            <person name="Harbers M."/>
            <person name="Hayashi Y."/>
            <person name="Hensch T.K."/>
            <person name="Hirokawa N."/>
            <person name="Hill D."/>
            <person name="Huminiecki L."/>
            <person name="Iacono M."/>
            <person name="Ikeo K."/>
            <person name="Iwama A."/>
            <person name="Ishikawa T."/>
            <person name="Jakt M."/>
            <person name="Kanapin A."/>
            <person name="Katoh M."/>
            <person name="Kawasawa Y."/>
            <person name="Kelso J."/>
            <person name="Kitamura H."/>
            <person name="Kitano H."/>
            <person name="Kollias G."/>
            <person name="Krishnan S.P."/>
            <person name="Kruger A."/>
            <person name="Kummerfeld S.K."/>
            <person name="Kurochkin I.V."/>
            <person name="Lareau L.F."/>
            <person name="Lazarevic D."/>
            <person name="Lipovich L."/>
            <person name="Liu J."/>
            <person name="Liuni S."/>
            <person name="McWilliam S."/>
            <person name="Madan Babu M."/>
            <person name="Madera M."/>
            <person name="Marchionni L."/>
            <person name="Matsuda H."/>
            <person name="Matsuzawa S."/>
            <person name="Miki H."/>
            <person name="Mignone F."/>
            <person name="Miyake S."/>
            <person name="Morris K."/>
            <person name="Mottagui-Tabar S."/>
            <person name="Mulder N."/>
            <person name="Nakano N."/>
            <person name="Nakauchi H."/>
            <person name="Ng P."/>
            <person name="Nilsson R."/>
            <person name="Nishiguchi S."/>
            <person name="Nishikawa S."/>
            <person name="Nori F."/>
            <person name="Ohara O."/>
            <person name="Okazaki Y."/>
            <person name="Orlando V."/>
            <person name="Pang K.C."/>
            <person name="Pavan W.J."/>
            <person name="Pavesi G."/>
            <person name="Pesole G."/>
            <person name="Petrovsky N."/>
            <person name="Piazza S."/>
            <person name="Reed J."/>
            <person name="Reid J.F."/>
            <person name="Ring B.Z."/>
            <person name="Ringwald M."/>
            <person name="Rost B."/>
            <person name="Ruan Y."/>
            <person name="Salzberg S.L."/>
            <person name="Sandelin A."/>
            <person name="Schneider C."/>
            <person name="Schoenbach C."/>
            <person name="Sekiguchi K."/>
            <person name="Semple C.A."/>
            <person name="Seno S."/>
            <person name="Sessa L."/>
            <person name="Sheng Y."/>
            <person name="Shibata Y."/>
            <person name="Shimada H."/>
            <person name="Shimada K."/>
            <person name="Silva D."/>
            <person name="Sinclair B."/>
            <person name="Sperling S."/>
            <person name="Stupka E."/>
            <person name="Sugiura K."/>
            <person name="Sultana R."/>
            <person name="Takenaka Y."/>
            <person name="Taki K."/>
            <person name="Tammoja K."/>
            <person name="Tan S.L."/>
            <person name="Tang S."/>
            <person name="Taylor M.S."/>
            <person name="Tegner J."/>
            <person name="Teichmann S.A."/>
            <person name="Ueda H.R."/>
            <person name="van Nimwegen E."/>
            <person name="Verardo R."/>
            <person name="Wei C.L."/>
            <person name="Yagi K."/>
            <person name="Yamanishi H."/>
            <person name="Zabarovsky E."/>
            <person name="Zhu S."/>
            <person name="Zimmer A."/>
            <person name="Hide W."/>
            <person name="Bult C."/>
            <person name="Grimmond S.M."/>
            <person name="Teasdale R.D."/>
            <person name="Liu E.T."/>
            <person name="Brusic V."/>
            <person name="Quackenbush J."/>
            <person name="Wahlestedt C."/>
            <person name="Mattick J.S."/>
            <person name="Hume D.A."/>
            <person name="Kai C."/>
            <person name="Sasaki D."/>
            <person name="Tomaru Y."/>
            <person name="Fukuda S."/>
            <person name="Kanamori-Katayama M."/>
            <person name="Suzuki M."/>
            <person name="Aoki J."/>
            <person name="Arakawa T."/>
            <person name="Iida J."/>
            <person name="Imamura K."/>
            <person name="Itoh M."/>
            <person name="Kato T."/>
            <person name="Kawaji H."/>
            <person name="Kawagashira N."/>
            <person name="Kawashima T."/>
            <person name="Kojima M."/>
            <person name="Kondo S."/>
            <person name="Konno H."/>
            <person name="Nakano K."/>
            <person name="Ninomiya N."/>
            <person name="Nishio T."/>
            <person name="Okada M."/>
            <person name="Plessy C."/>
            <person name="Shibata K."/>
            <person name="Shiraki T."/>
            <person name="Suzuki S."/>
            <person name="Tagami M."/>
            <person name="Waki K."/>
            <person name="Watahiki A."/>
            <person name="Okamura-Oho Y."/>
            <person name="Suzuki H."/>
            <person name="Kawai J."/>
            <person name="Hayashizaki Y."/>
        </authorList>
    </citation>
    <scope>NUCLEOTIDE SEQUENCE [LARGE SCALE MRNA]</scope>
    <source>
        <strain>C57BL/6J</strain>
        <tissue>Pancreas</tissue>
    </source>
</reference>
<reference key="3">
    <citation type="journal article" date="2004" name="Genome Res.">
        <title>The status, quality, and expansion of the NIH full-length cDNA project: the Mammalian Gene Collection (MGC).</title>
        <authorList>
            <consortium name="The MGC Project Team"/>
        </authorList>
    </citation>
    <scope>NUCLEOTIDE SEQUENCE [LARGE SCALE MRNA]</scope>
    <source>
        <strain>FVB/N</strain>
        <tissue>Liver</tissue>
    </source>
</reference>
<reference key="4">
    <citation type="journal article" date="2002" name="J. Biol. Chem.">
        <title>N4WBP5, a potential target for ubiquitination by the Nedd4 family of proteins, is a novel Golgi-associated protein.</title>
        <authorList>
            <person name="Harvey K.F."/>
            <person name="Shearwin-Whyatt L.M."/>
            <person name="Fotia A."/>
            <person name="Parton R.G."/>
            <person name="Kumar S."/>
        </authorList>
    </citation>
    <scope>FUNCTION</scope>
    <scope>TISSUE SPECIFICITY</scope>
    <scope>INTERACTION WITH NEDD4; NEDD4L; U2SURP; WWP2 AND ITCH</scope>
    <scope>DOMAIN</scope>
    <scope>UBIQUITINATION BY NEDD4</scope>
    <scope>SUBCELLULAR LOCATION</scope>
</reference>
<reference key="5">
    <citation type="journal article" date="2006" name="Immunity">
        <title>Ndfip1 protein promotes the function of itch ubiquitin ligase to prevent T cell activation and T helper 2 cell-mediated inflammation.</title>
        <authorList>
            <person name="Oliver P.M."/>
            <person name="Cao X."/>
            <person name="Worthen G.S."/>
            <person name="Shi P."/>
            <person name="Briones N."/>
            <person name="MacLeod M."/>
            <person name="White J."/>
            <person name="Kirby P."/>
            <person name="Kappler J."/>
            <person name="Marrack P."/>
            <person name="Yang B."/>
        </authorList>
    </citation>
    <scope>FUNCTION</scope>
    <scope>DISRUPTION PHENOTYPE</scope>
    <scope>INTERACTION WITH ITCH</scope>
    <scope>TISSUE SPECIFICITY</scope>
</reference>
<reference key="6">
    <citation type="journal article" date="2006" name="J. Neurosci.">
        <title>Nedd4-WW domain-binding protein 5 (Ndfip1) is associated with neuronal survival after acute cortical brain injury.</title>
        <authorList>
            <person name="Sang Q."/>
            <person name="Kim M.H."/>
            <person name="Kumar S."/>
            <person name="Bye N."/>
            <person name="Morganti-Kossman M.C."/>
            <person name="Gunnersen J."/>
            <person name="Fuller S."/>
            <person name="Howitt J."/>
            <person name="Hyde L."/>
            <person name="Beissbarth T."/>
            <person name="Scott H.S."/>
            <person name="Silke J."/>
            <person name="Tan S.S."/>
        </authorList>
    </citation>
    <scope>SUBCELLULAR LOCATION</scope>
    <scope>INDUCTION BY TRAUMATIC BRAIN INJURY</scope>
</reference>
<reference key="7">
    <citation type="journal article" date="2008" name="Blood">
        <title>Regulation of the divalent metal ion transporter DMT1 and iron homeostasis by a ubiquitin-dependent mechanism involving Ndfips and WWP2.</title>
        <authorList>
            <person name="Foot N.J."/>
            <person name="Dalton H.E."/>
            <person name="Shearwin-Whyatt L.M."/>
            <person name="Dorstyn L."/>
            <person name="Tan S.S."/>
            <person name="Yang B."/>
            <person name="Kumar S."/>
        </authorList>
    </citation>
    <scope>DISRUPTION PHENOTYPE</scope>
</reference>
<reference key="8">
    <citation type="journal article" date="2008" name="J. Biol. Chem.">
        <title>Nedd4 family-interacting protein 1 (Ndfip1) is required for the exosomal secretion of Nedd4 family proteins.</title>
        <authorList>
            <person name="Putz U."/>
            <person name="Howitt J."/>
            <person name="Lackovic J."/>
            <person name="Foot N."/>
            <person name="Kumar S."/>
            <person name="Silke J."/>
            <person name="Tan S.S."/>
        </authorList>
    </citation>
    <scope>SUBCELLULAR LOCATION</scope>
</reference>
<reference key="9">
    <citation type="journal article" date="2009" name="Proc. Natl. Acad. Sci. U.S.A.">
        <title>Divalent metal transporter 1 (DMT1) regulation by Ndfip1 prevents metal toxicity in human neurons.</title>
        <authorList>
            <person name="Howitt J."/>
            <person name="Putz U."/>
            <person name="Lackovic J."/>
            <person name="Doan A."/>
            <person name="Dorstyn L."/>
            <person name="Cheng H."/>
            <person name="Yang B."/>
            <person name="Chan-Ling T."/>
            <person name="Silke J."/>
            <person name="Kumar S."/>
            <person name="Tan S.S."/>
        </authorList>
    </citation>
    <scope>DISRUPTION PHENOTYPE</scope>
</reference>
<reference key="10">
    <citation type="journal article" date="2011" name="Mucosal Immunol.">
        <title>The ubiquitin ligase adaptor Ndfip1 regulates T cell-mediated gastrointestinal inflammation and inflammatory bowel disease susceptibility.</title>
        <authorList>
            <person name="Ramon H.E."/>
            <person name="Riling C.R."/>
            <person name="Bradfield J."/>
            <person name="Yang B."/>
            <person name="Hakonarson H."/>
            <person name="Oliver P.M."/>
        </authorList>
    </citation>
    <scope>FUNCTION</scope>
    <scope>DISRUPTION PHENOTYPE</scope>
</reference>
<reference key="11">
    <citation type="journal article" date="2014" name="Cereb. Cortex">
        <title>Ndfip1 is required for the development of pyramidal neuron dendrites and spines in the neocortex.</title>
        <authorList>
            <person name="Hammond V.E."/>
            <person name="Gunnersen J.M."/>
            <person name="Goh C.P."/>
            <person name="Low L.H."/>
            <person name="Hyakumura T."/>
            <person name="Tang M.M."/>
            <person name="Britto J.M."/>
            <person name="Putz U."/>
            <person name="Howitt J.A."/>
            <person name="Tan S.S."/>
        </authorList>
    </citation>
    <scope>FUNCTION</scope>
    <scope>SUBCELLULAR LOCATION</scope>
    <scope>TISSUE SPECIFICITY</scope>
</reference>
<reference key="12">
    <citation type="journal article" date="2014" name="Proc. Natl. Acad. Sci. U.S.A.">
        <title>Ndfip1 mediates peripheral tolerance to self and exogenous antigen by inducing cell cycle exit in responding CD4+ T cells.</title>
        <authorList>
            <person name="Altin J.A."/>
            <person name="Daley S.R."/>
            <person name="Howitt J."/>
            <person name="Rickards H.J."/>
            <person name="Batkin A.K."/>
            <person name="Horikawa K."/>
            <person name="Prasad S.J."/>
            <person name="Nelms K.A."/>
            <person name="Kumar S."/>
            <person name="Wu L.C."/>
            <person name="Tan S.S."/>
            <person name="Cook M.C."/>
            <person name="Goodnow C.C."/>
        </authorList>
    </citation>
    <scope>FUNCTION</scope>
</reference>
<reference key="13">
    <citation type="journal article" date="2015" name="Biochem. Biophys. Res. Commun.">
        <title>Nedd4 family interacting protein 1 (Ndfip1) promotes death of pancreatic beta cells.</title>
        <authorList>
            <person name="Beck A."/>
            <person name="Shatz-Azoulay H."/>
            <person name="Vinik Y."/>
            <person name="Isaac R."/>
            <person name="Boura-Halfon S."/>
            <person name="Zick Y."/>
        </authorList>
    </citation>
    <scope>FUNCTION</scope>
</reference>
<reference key="14">
    <citation type="journal article" date="2015" name="J. Biol. Chem.">
        <title>Nedd4 family interacting protein 1 (Ndfip1) is required for ubiquitination and nuclear trafficking of BRCA1-associated ATM activator 1 (BRAT1) during the DNA damage response.</title>
        <authorList>
            <person name="Low L.H."/>
            <person name="Chow Y.L."/>
            <person name="Li Y."/>
            <person name="Goh C.P."/>
            <person name="Putz U."/>
            <person name="Silke J."/>
            <person name="Ouchi T."/>
            <person name="Howitt J."/>
            <person name="Tan S.S."/>
        </authorList>
    </citation>
    <scope>FUNCTION</scope>
</reference>
<reference key="15">
    <citation type="journal article" date="2015" name="J. Immunol.">
        <title>Ndfip1 regulates itch ligase activity and airway inflammation via UbcH7.</title>
        <authorList>
            <person name="Kathania M."/>
            <person name="Zeng M."/>
            <person name="Yadav V.N."/>
            <person name="Moghaddam S.J."/>
            <person name="Yang B."/>
            <person name="Venuprasad K."/>
        </authorList>
    </citation>
    <scope>FUNCTION</scope>
    <scope>INTERACTION WITH UBE2L3 AND ITCH</scope>
    <scope>IDENTIFICATION IN COMPLEX WITH ITCH AND MAP3K7</scope>
</reference>
<reference key="16">
    <citation type="journal article" date="2015" name="J. Mol. Cell Biol.">
        <title>Ndfip1 represses cell proliferation by controlling Pten localization and signaling specificity.</title>
        <authorList>
            <person name="Howitt J."/>
            <person name="Low L.H."/>
            <person name="Putz U."/>
            <person name="Doan A."/>
            <person name="Lackovic J."/>
            <person name="Goh C.P."/>
            <person name="Gunnersen J."/>
            <person name="Silke J."/>
            <person name="Tan S.S."/>
        </authorList>
    </citation>
    <scope>FUNCTION</scope>
</reference>
<reference key="17">
    <citation type="journal article" date="2016" name="Nat. Commun.">
        <title>Ndfip-mediated degradation of Jak1 tunes cytokine signalling to limit expansion of CD4+ effector T cells.</title>
        <authorList>
            <person name="O'Leary C.E."/>
            <person name="Riling C.R."/>
            <person name="Spruce L.A."/>
            <person name="Ding H."/>
            <person name="Kumar S."/>
            <person name="Deng G."/>
            <person name="Liu Y."/>
            <person name="Seeholzer S.H."/>
            <person name="Oliver P.M."/>
        </authorList>
    </citation>
    <scope>FUNCTION</scope>
</reference>
<reference key="18">
    <citation type="journal article" date="2017" name="Sci. Rep.">
        <title>Ndfip1 restricts Th17 cell potency by limiting lineage stability and proinflammatory cytokine production.</title>
        <authorList>
            <person name="Kesewa Layman A.A."/>
            <person name="Sprout S.L."/>
            <person name="Phillips D."/>
            <person name="Oliver P.M."/>
        </authorList>
    </citation>
    <scope>FUNCTION</scope>
</reference>
<accession>Q8R0W6</accession>
<accession>Q9EQH8</accession>